<organism>
    <name type="scientific">Neisseria gonorrhoeae (strain NCCP11945)</name>
    <dbReference type="NCBI Taxonomy" id="521006"/>
    <lineage>
        <taxon>Bacteria</taxon>
        <taxon>Pseudomonadati</taxon>
        <taxon>Pseudomonadota</taxon>
        <taxon>Betaproteobacteria</taxon>
        <taxon>Neisseriales</taxon>
        <taxon>Neisseriaceae</taxon>
        <taxon>Neisseria</taxon>
    </lineage>
</organism>
<accession>B4RJT7</accession>
<gene>
    <name evidence="1" type="primary">rnc</name>
    <name type="ordered locus">NGK_0397</name>
</gene>
<dbReference type="EC" id="3.1.26.3" evidence="1"/>
<dbReference type="EMBL" id="CP001050">
    <property type="protein sequence ID" value="ACF29088.1"/>
    <property type="molecule type" value="Genomic_DNA"/>
</dbReference>
<dbReference type="RefSeq" id="WP_012503422.1">
    <property type="nucleotide sequence ID" value="NC_011035.1"/>
</dbReference>
<dbReference type="SMR" id="B4RJT7"/>
<dbReference type="GeneID" id="66752594"/>
<dbReference type="KEGG" id="ngk:NGK_0397"/>
<dbReference type="HOGENOM" id="CLU_000907_1_1_4"/>
<dbReference type="Proteomes" id="UP000002564">
    <property type="component" value="Chromosome"/>
</dbReference>
<dbReference type="GO" id="GO:0005737">
    <property type="term" value="C:cytoplasm"/>
    <property type="evidence" value="ECO:0007669"/>
    <property type="project" value="UniProtKB-SubCell"/>
</dbReference>
<dbReference type="GO" id="GO:0003725">
    <property type="term" value="F:double-stranded RNA binding"/>
    <property type="evidence" value="ECO:0007669"/>
    <property type="project" value="TreeGrafter"/>
</dbReference>
<dbReference type="GO" id="GO:0046872">
    <property type="term" value="F:metal ion binding"/>
    <property type="evidence" value="ECO:0007669"/>
    <property type="project" value="UniProtKB-KW"/>
</dbReference>
<dbReference type="GO" id="GO:0004525">
    <property type="term" value="F:ribonuclease III activity"/>
    <property type="evidence" value="ECO:0007669"/>
    <property type="project" value="UniProtKB-UniRule"/>
</dbReference>
<dbReference type="GO" id="GO:0019843">
    <property type="term" value="F:rRNA binding"/>
    <property type="evidence" value="ECO:0007669"/>
    <property type="project" value="UniProtKB-KW"/>
</dbReference>
<dbReference type="GO" id="GO:0006397">
    <property type="term" value="P:mRNA processing"/>
    <property type="evidence" value="ECO:0007669"/>
    <property type="project" value="UniProtKB-UniRule"/>
</dbReference>
<dbReference type="GO" id="GO:0010468">
    <property type="term" value="P:regulation of gene expression"/>
    <property type="evidence" value="ECO:0007669"/>
    <property type="project" value="TreeGrafter"/>
</dbReference>
<dbReference type="GO" id="GO:0006364">
    <property type="term" value="P:rRNA processing"/>
    <property type="evidence" value="ECO:0007669"/>
    <property type="project" value="UniProtKB-UniRule"/>
</dbReference>
<dbReference type="GO" id="GO:0008033">
    <property type="term" value="P:tRNA processing"/>
    <property type="evidence" value="ECO:0007669"/>
    <property type="project" value="UniProtKB-KW"/>
</dbReference>
<dbReference type="CDD" id="cd10845">
    <property type="entry name" value="DSRM_RNAse_III_family"/>
    <property type="match status" value="1"/>
</dbReference>
<dbReference type="CDD" id="cd00593">
    <property type="entry name" value="RIBOc"/>
    <property type="match status" value="1"/>
</dbReference>
<dbReference type="FunFam" id="1.10.1520.10:FF:000001">
    <property type="entry name" value="Ribonuclease 3"/>
    <property type="match status" value="1"/>
</dbReference>
<dbReference type="Gene3D" id="3.30.160.20">
    <property type="match status" value="1"/>
</dbReference>
<dbReference type="Gene3D" id="1.10.1520.10">
    <property type="entry name" value="Ribonuclease III domain"/>
    <property type="match status" value="1"/>
</dbReference>
<dbReference type="HAMAP" id="MF_00104">
    <property type="entry name" value="RNase_III"/>
    <property type="match status" value="1"/>
</dbReference>
<dbReference type="InterPro" id="IPR014720">
    <property type="entry name" value="dsRBD_dom"/>
</dbReference>
<dbReference type="InterPro" id="IPR011907">
    <property type="entry name" value="RNase_III"/>
</dbReference>
<dbReference type="InterPro" id="IPR000999">
    <property type="entry name" value="RNase_III_dom"/>
</dbReference>
<dbReference type="InterPro" id="IPR036389">
    <property type="entry name" value="RNase_III_sf"/>
</dbReference>
<dbReference type="NCBIfam" id="TIGR02191">
    <property type="entry name" value="RNaseIII"/>
    <property type="match status" value="1"/>
</dbReference>
<dbReference type="PANTHER" id="PTHR11207:SF0">
    <property type="entry name" value="RIBONUCLEASE 3"/>
    <property type="match status" value="1"/>
</dbReference>
<dbReference type="PANTHER" id="PTHR11207">
    <property type="entry name" value="RIBONUCLEASE III"/>
    <property type="match status" value="1"/>
</dbReference>
<dbReference type="Pfam" id="PF00035">
    <property type="entry name" value="dsrm"/>
    <property type="match status" value="1"/>
</dbReference>
<dbReference type="Pfam" id="PF14622">
    <property type="entry name" value="Ribonucleas_3_3"/>
    <property type="match status" value="1"/>
</dbReference>
<dbReference type="SMART" id="SM00358">
    <property type="entry name" value="DSRM"/>
    <property type="match status" value="1"/>
</dbReference>
<dbReference type="SMART" id="SM00535">
    <property type="entry name" value="RIBOc"/>
    <property type="match status" value="1"/>
</dbReference>
<dbReference type="SUPFAM" id="SSF54768">
    <property type="entry name" value="dsRNA-binding domain-like"/>
    <property type="match status" value="1"/>
</dbReference>
<dbReference type="SUPFAM" id="SSF69065">
    <property type="entry name" value="RNase III domain-like"/>
    <property type="match status" value="1"/>
</dbReference>
<dbReference type="PROSITE" id="PS50137">
    <property type="entry name" value="DS_RBD"/>
    <property type="match status" value="1"/>
</dbReference>
<dbReference type="PROSITE" id="PS00517">
    <property type="entry name" value="RNASE_3_1"/>
    <property type="match status" value="1"/>
</dbReference>
<dbReference type="PROSITE" id="PS50142">
    <property type="entry name" value="RNASE_3_2"/>
    <property type="match status" value="1"/>
</dbReference>
<keyword id="KW-0963">Cytoplasm</keyword>
<keyword id="KW-0255">Endonuclease</keyword>
<keyword id="KW-0378">Hydrolase</keyword>
<keyword id="KW-0460">Magnesium</keyword>
<keyword id="KW-0479">Metal-binding</keyword>
<keyword id="KW-0507">mRNA processing</keyword>
<keyword id="KW-0540">Nuclease</keyword>
<keyword id="KW-0694">RNA-binding</keyword>
<keyword id="KW-0698">rRNA processing</keyword>
<keyword id="KW-0699">rRNA-binding</keyword>
<keyword id="KW-0819">tRNA processing</keyword>
<comment type="function">
    <text evidence="1">Digests double-stranded RNA. Involved in the processing of primary rRNA transcript to yield the immediate precursors to the large and small rRNAs (23S and 16S). Processes some mRNAs, and tRNAs when they are encoded in the rRNA operon. Processes pre-crRNA and tracrRNA of type II CRISPR loci if present in the organism.</text>
</comment>
<comment type="catalytic activity">
    <reaction evidence="1">
        <text>Endonucleolytic cleavage to 5'-phosphomonoester.</text>
        <dbReference type="EC" id="3.1.26.3"/>
    </reaction>
</comment>
<comment type="cofactor">
    <cofactor evidence="1">
        <name>Mg(2+)</name>
        <dbReference type="ChEBI" id="CHEBI:18420"/>
    </cofactor>
</comment>
<comment type="subunit">
    <text evidence="1">Homodimer.</text>
</comment>
<comment type="subcellular location">
    <subcellularLocation>
        <location evidence="1">Cytoplasm</location>
    </subcellularLocation>
</comment>
<comment type="similarity">
    <text evidence="1">Belongs to the ribonuclease III family.</text>
</comment>
<reference key="1">
    <citation type="journal article" date="2008" name="J. Bacteriol.">
        <title>Complete genome sequence of Neisseria gonorrhoeae NCCP11945.</title>
        <authorList>
            <person name="Chung G.T."/>
            <person name="Yoo J.S."/>
            <person name="Oh H.B."/>
            <person name="Lee Y.S."/>
            <person name="Cha S.H."/>
            <person name="Kim S.J."/>
            <person name="Yoo C.K."/>
        </authorList>
    </citation>
    <scope>NUCLEOTIDE SEQUENCE [LARGE SCALE GENOMIC DNA]</scope>
    <source>
        <strain>NCCP11945</strain>
    </source>
</reference>
<name>RNC_NEIG2</name>
<sequence length="239" mass="26917">MKDDVLKRQAHTAIQKKLGYAFRDMSLLRRALTHRSHHAKHNERFEFVGDSILNYTVARMLFDAFPKLTEGELSRLRASLVNEGVLAEMAAEMNVGDGLYLGAGELKSGGFRRPSILADAMEAMFAAVSFDADFNTAEKVVRHLFAERVRRADFQNQAKDGKTALQEALQARRFALPKYRIEEQIGHANDSMFVISCDLGELGFVCRAKGTSRKAAEQEAAKEALKWLEEKLPLKKKKK</sequence>
<feature type="chain" id="PRO_1000094122" description="Ribonuclease 3">
    <location>
        <begin position="1"/>
        <end position="239"/>
    </location>
</feature>
<feature type="domain" description="RNase III" evidence="1">
    <location>
        <begin position="11"/>
        <end position="133"/>
    </location>
</feature>
<feature type="domain" description="DRBM" evidence="1">
    <location>
        <begin position="160"/>
        <end position="230"/>
    </location>
</feature>
<feature type="active site" evidence="1">
    <location>
        <position position="50"/>
    </location>
</feature>
<feature type="active site" evidence="1">
    <location>
        <position position="122"/>
    </location>
</feature>
<feature type="binding site" evidence="1">
    <location>
        <position position="46"/>
    </location>
    <ligand>
        <name>Mg(2+)</name>
        <dbReference type="ChEBI" id="CHEBI:18420"/>
    </ligand>
</feature>
<feature type="binding site" evidence="1">
    <location>
        <position position="119"/>
    </location>
    <ligand>
        <name>Mg(2+)</name>
        <dbReference type="ChEBI" id="CHEBI:18420"/>
    </ligand>
</feature>
<feature type="binding site" evidence="1">
    <location>
        <position position="122"/>
    </location>
    <ligand>
        <name>Mg(2+)</name>
        <dbReference type="ChEBI" id="CHEBI:18420"/>
    </ligand>
</feature>
<evidence type="ECO:0000255" key="1">
    <source>
        <dbReference type="HAMAP-Rule" id="MF_00104"/>
    </source>
</evidence>
<protein>
    <recommendedName>
        <fullName evidence="1">Ribonuclease 3</fullName>
        <ecNumber evidence="1">3.1.26.3</ecNumber>
    </recommendedName>
    <alternativeName>
        <fullName evidence="1">Ribonuclease III</fullName>
        <shortName evidence="1">RNase III</shortName>
    </alternativeName>
</protein>
<proteinExistence type="inferred from homology"/>